<sequence length="214" mass="24259">MGSSQSKKRSEAWVRYSSALRQLVGGPVTPDGYKQIESSQGAEKQSLLRGRAYGTYSEGLDKVQNDPLTKDEKLDLTQQDPEEEEEVGFPVCRQVSLRVPSYKDLIDFSHFIKEKGGLGGIYYSRRREEILDLYAENEWGFEPGWQQYTTGPGTRYPKTFGFLFKLEPVSRAIGDEYAANNHLLHSSQLCPQEDPEGETLMWSGTLILPMTLQH</sequence>
<proteinExistence type="inferred from homology"/>
<evidence type="ECO:0000250" key="1"/>
<evidence type="ECO:0000256" key="2">
    <source>
        <dbReference type="SAM" id="MobiDB-lite"/>
    </source>
</evidence>
<evidence type="ECO:0000305" key="3"/>
<dbReference type="EMBL" id="M27470">
    <property type="protein sequence ID" value="AAB49575.1"/>
    <property type="molecule type" value="Genomic_RNA"/>
</dbReference>
<dbReference type="SMR" id="P22378"/>
<dbReference type="Proteomes" id="UP000259373">
    <property type="component" value="Segment"/>
</dbReference>
<dbReference type="GO" id="GO:0020002">
    <property type="term" value="C:host cell plasma membrane"/>
    <property type="evidence" value="ECO:0007669"/>
    <property type="project" value="UniProtKB-SubCell"/>
</dbReference>
<dbReference type="GO" id="GO:0016020">
    <property type="term" value="C:membrane"/>
    <property type="evidence" value="ECO:0007669"/>
    <property type="project" value="UniProtKB-KW"/>
</dbReference>
<dbReference type="GO" id="GO:0005525">
    <property type="term" value="F:GTP binding"/>
    <property type="evidence" value="ECO:0007669"/>
    <property type="project" value="InterPro"/>
</dbReference>
<dbReference type="Gene3D" id="3.30.62.10">
    <property type="entry name" value="Nef Regulatory Factor"/>
    <property type="match status" value="1"/>
</dbReference>
<dbReference type="InterPro" id="IPR027481">
    <property type="entry name" value="HIV-1_Nef_core_sf"/>
</dbReference>
<dbReference type="InterPro" id="IPR001558">
    <property type="entry name" value="HIV_Nef"/>
</dbReference>
<dbReference type="Pfam" id="PF00469">
    <property type="entry name" value="F-protein"/>
    <property type="match status" value="1"/>
</dbReference>
<dbReference type="SUPFAM" id="SSF55671">
    <property type="entry name" value="Regulatory factor Nef"/>
    <property type="match status" value="1"/>
</dbReference>
<comment type="function">
    <text evidence="1">Seems to play a role in optimizing the host cell environment for viral replication without causing cell death by apoptosis. Enhances virus infectivity and pathogenicity. Probably involved in viral immune evasion mechanisms (By similarity).</text>
</comment>
<comment type="function">
    <text evidence="1">In infected CD4(+) T-lymphocytes, down-regulates cell surface expression of CD4, CD28, CD3, and MHC-I or MHC-II molecules.</text>
</comment>
<comment type="function">
    <text evidence="1">Interferes with TCR signaling from the cell membrane. Interacts with CD247/TCRZ (TCR zeta chain) and exert potent down-regulation of cell surface TCR/CD3 complexes (By similarity).</text>
</comment>
<comment type="subunit">
    <text evidence="1">Homodimer. Interacts with host CD247/TCRZ; this interaction induces down-regulation of cell surface TCR/CD3 complexes.</text>
</comment>
<comment type="subcellular location">
    <subcellularLocation>
        <location evidence="1">Host cell membrane</location>
        <topology evidence="1">Lipid-anchor</topology>
        <orientation evidence="1">Cytoplasmic side</orientation>
    </subcellularLocation>
    <text evidence="1">Associates with the inner plasma membrane through its N-terminal domain.</text>
</comment>
<comment type="domain">
    <text evidence="1">The N-terminal domain is composed of the N-myristoyl glycine and of a cluster of positively charged amino acids. It is required for inner plasma membrane targeting of Nef (By similarity).</text>
</comment>
<comment type="miscellaneous">
    <text>This is an African mandrill isolate.</text>
</comment>
<comment type="similarity">
    <text evidence="3">Belongs to the lentivirus primate group Nef protein family.</text>
</comment>
<accession>P22378</accession>
<name>NEF_SIVGB</name>
<organismHost>
    <name type="scientific">Cercopithecidae</name>
    <name type="common">Old World monkeys</name>
    <dbReference type="NCBI Taxonomy" id="9527"/>
</organismHost>
<keyword id="KW-1032">Host cell membrane</keyword>
<keyword id="KW-1043">Host membrane</keyword>
<keyword id="KW-0945">Host-virus interaction</keyword>
<keyword id="KW-0449">Lipoprotein</keyword>
<keyword id="KW-0472">Membrane</keyword>
<keyword id="KW-0519">Myristate</keyword>
<keyword id="KW-0899">Viral immunoevasion</keyword>
<keyword id="KW-0843">Virulence</keyword>
<feature type="initiator methionine" description="Removed; by host" evidence="1">
    <location>
        <position position="1"/>
    </location>
</feature>
<feature type="chain" id="PRO_0000085243" description="Protein Nef">
    <location>
        <begin position="2"/>
        <end position="214"/>
    </location>
</feature>
<feature type="region of interest" description="Disordered" evidence="2">
    <location>
        <begin position="27"/>
        <end position="48"/>
    </location>
</feature>
<feature type="region of interest" description="Acidic">
    <location>
        <begin position="80"/>
        <end position="86"/>
    </location>
</feature>
<feature type="region of interest" description="Mediates dimerization" evidence="1">
    <location>
        <begin position="129"/>
        <end position="145"/>
    </location>
</feature>
<feature type="lipid moiety-binding region" description="N-myristoyl glycine; by host" evidence="1">
    <location>
        <position position="2"/>
    </location>
</feature>
<organism>
    <name type="scientific">Simian immunodeficiency virus (isolate GB1)</name>
    <name type="common">SIV-mnd</name>
    <name type="synonym">Simian immunodeficiency virus mandrill</name>
    <dbReference type="NCBI Taxonomy" id="11732"/>
    <lineage>
        <taxon>Viruses</taxon>
        <taxon>Riboviria</taxon>
        <taxon>Pararnavirae</taxon>
        <taxon>Artverviricota</taxon>
        <taxon>Revtraviricetes</taxon>
        <taxon>Ortervirales</taxon>
        <taxon>Retroviridae</taxon>
        <taxon>Orthoretrovirinae</taxon>
        <taxon>Lentivirus</taxon>
        <taxon>Simian immunodeficiency virus</taxon>
    </lineage>
</organism>
<protein>
    <recommendedName>
        <fullName>Protein Nef</fullName>
    </recommendedName>
    <alternativeName>
        <fullName>3'ORF</fullName>
    </alternativeName>
    <alternativeName>
        <fullName>Negative factor</fullName>
        <shortName>F-protein</shortName>
    </alternativeName>
</protein>
<reference key="1">
    <citation type="journal article" date="1989" name="Nature">
        <title>Sequence of a novel simian immunodeficiency virus from a wild-caught African mandrill.</title>
        <authorList>
            <person name="Tsujimoto H."/>
            <person name="Hasegawa A."/>
            <person name="Maki N."/>
            <person name="Fukasawa M."/>
            <person name="Miura T."/>
            <person name="Speidel S."/>
            <person name="Cooper R.W."/>
            <person name="Moriyama E.N."/>
            <person name="Gojobori T."/>
            <person name="Hayami M."/>
        </authorList>
    </citation>
    <scope>NUCLEOTIDE SEQUENCE [GENOMIC RNA]</scope>
</reference>
<gene>
    <name type="primary">nef</name>
</gene>